<proteinExistence type="inferred from homology"/>
<keyword id="KW-0067">ATP-binding</keyword>
<keyword id="KW-0418">Kinase</keyword>
<keyword id="KW-0547">Nucleotide-binding</keyword>
<keyword id="KW-0597">Phosphoprotein</keyword>
<keyword id="KW-1185">Reference proteome</keyword>
<keyword id="KW-0723">Serine/threonine-protein kinase</keyword>
<keyword id="KW-0808">Transferase</keyword>
<accession>A2XUW1</accession>
<reference key="1">
    <citation type="journal article" date="2005" name="PLoS Biol.">
        <title>The genomes of Oryza sativa: a history of duplications.</title>
        <authorList>
            <person name="Yu J."/>
            <person name="Wang J."/>
            <person name="Lin W."/>
            <person name="Li S."/>
            <person name="Li H."/>
            <person name="Zhou J."/>
            <person name="Ni P."/>
            <person name="Dong W."/>
            <person name="Hu S."/>
            <person name="Zeng C."/>
            <person name="Zhang J."/>
            <person name="Zhang Y."/>
            <person name="Li R."/>
            <person name="Xu Z."/>
            <person name="Li S."/>
            <person name="Li X."/>
            <person name="Zheng H."/>
            <person name="Cong L."/>
            <person name="Lin L."/>
            <person name="Yin J."/>
            <person name="Geng J."/>
            <person name="Li G."/>
            <person name="Shi J."/>
            <person name="Liu J."/>
            <person name="Lv H."/>
            <person name="Li J."/>
            <person name="Wang J."/>
            <person name="Deng Y."/>
            <person name="Ran L."/>
            <person name="Shi X."/>
            <person name="Wang X."/>
            <person name="Wu Q."/>
            <person name="Li C."/>
            <person name="Ren X."/>
            <person name="Wang J."/>
            <person name="Wang X."/>
            <person name="Li D."/>
            <person name="Liu D."/>
            <person name="Zhang X."/>
            <person name="Ji Z."/>
            <person name="Zhao W."/>
            <person name="Sun Y."/>
            <person name="Zhang Z."/>
            <person name="Bao J."/>
            <person name="Han Y."/>
            <person name="Dong L."/>
            <person name="Ji J."/>
            <person name="Chen P."/>
            <person name="Wu S."/>
            <person name="Liu J."/>
            <person name="Xiao Y."/>
            <person name="Bu D."/>
            <person name="Tan J."/>
            <person name="Yang L."/>
            <person name="Ye C."/>
            <person name="Zhang J."/>
            <person name="Xu J."/>
            <person name="Zhou Y."/>
            <person name="Yu Y."/>
            <person name="Zhang B."/>
            <person name="Zhuang S."/>
            <person name="Wei H."/>
            <person name="Liu B."/>
            <person name="Lei M."/>
            <person name="Yu H."/>
            <person name="Li Y."/>
            <person name="Xu H."/>
            <person name="Wei S."/>
            <person name="He X."/>
            <person name="Fang L."/>
            <person name="Zhang Z."/>
            <person name="Zhang Y."/>
            <person name="Huang X."/>
            <person name="Su Z."/>
            <person name="Tong W."/>
            <person name="Li J."/>
            <person name="Tong Z."/>
            <person name="Li S."/>
            <person name="Ye J."/>
            <person name="Wang L."/>
            <person name="Fang L."/>
            <person name="Lei T."/>
            <person name="Chen C.-S."/>
            <person name="Chen H.-C."/>
            <person name="Xu Z."/>
            <person name="Li H."/>
            <person name="Huang H."/>
            <person name="Zhang F."/>
            <person name="Xu H."/>
            <person name="Li N."/>
            <person name="Zhao C."/>
            <person name="Li S."/>
            <person name="Dong L."/>
            <person name="Huang Y."/>
            <person name="Li L."/>
            <person name="Xi Y."/>
            <person name="Qi Q."/>
            <person name="Li W."/>
            <person name="Zhang B."/>
            <person name="Hu W."/>
            <person name="Zhang Y."/>
            <person name="Tian X."/>
            <person name="Jiao Y."/>
            <person name="Liang X."/>
            <person name="Jin J."/>
            <person name="Gao L."/>
            <person name="Zheng W."/>
            <person name="Hao B."/>
            <person name="Liu S.-M."/>
            <person name="Wang W."/>
            <person name="Yuan L."/>
            <person name="Cao M."/>
            <person name="McDermott J."/>
            <person name="Samudrala R."/>
            <person name="Wang J."/>
            <person name="Wong G.K.-S."/>
            <person name="Yang H."/>
        </authorList>
    </citation>
    <scope>NUCLEOTIDE SEQUENCE [LARGE SCALE GENOMIC DNA]</scope>
    <source>
        <strain>cv. 93-11</strain>
    </source>
</reference>
<name>CDKG2_ORYSI</name>
<feature type="chain" id="PRO_0000296113" description="Cyclin-dependent kinase G-2">
    <location>
        <begin position="1"/>
        <end position="710"/>
    </location>
</feature>
<feature type="domain" description="Protein kinase" evidence="2">
    <location>
        <begin position="365"/>
        <end position="656"/>
    </location>
</feature>
<feature type="region of interest" description="Disordered" evidence="4">
    <location>
        <begin position="1"/>
        <end position="350"/>
    </location>
</feature>
<feature type="compositionally biased region" description="Basic and acidic residues" evidence="4">
    <location>
        <begin position="8"/>
        <end position="30"/>
    </location>
</feature>
<feature type="compositionally biased region" description="Basic residues" evidence="4">
    <location>
        <begin position="31"/>
        <end position="40"/>
    </location>
</feature>
<feature type="compositionally biased region" description="Basic and acidic residues" evidence="4">
    <location>
        <begin position="41"/>
        <end position="64"/>
    </location>
</feature>
<feature type="compositionally biased region" description="Low complexity" evidence="4">
    <location>
        <begin position="124"/>
        <end position="133"/>
    </location>
</feature>
<feature type="compositionally biased region" description="Basic and acidic residues" evidence="4">
    <location>
        <begin position="144"/>
        <end position="163"/>
    </location>
</feature>
<feature type="compositionally biased region" description="Pro residues" evidence="4">
    <location>
        <begin position="170"/>
        <end position="182"/>
    </location>
</feature>
<feature type="compositionally biased region" description="Basic and acidic residues" evidence="4">
    <location>
        <begin position="183"/>
        <end position="195"/>
    </location>
</feature>
<feature type="compositionally biased region" description="Basic and acidic residues" evidence="4">
    <location>
        <begin position="209"/>
        <end position="218"/>
    </location>
</feature>
<feature type="compositionally biased region" description="Acidic residues" evidence="4">
    <location>
        <begin position="299"/>
        <end position="308"/>
    </location>
</feature>
<feature type="compositionally biased region" description="Basic and acidic residues" evidence="4">
    <location>
        <begin position="335"/>
        <end position="344"/>
    </location>
</feature>
<feature type="active site" description="Proton acceptor" evidence="2 3">
    <location>
        <position position="489"/>
    </location>
</feature>
<feature type="binding site" evidence="2">
    <location>
        <begin position="371"/>
        <end position="379"/>
    </location>
    <ligand>
        <name>ATP</name>
        <dbReference type="ChEBI" id="CHEBI:30616"/>
    </ligand>
</feature>
<feature type="binding site" evidence="2">
    <location>
        <position position="394"/>
    </location>
    <ligand>
        <name>ATP</name>
        <dbReference type="ChEBI" id="CHEBI:30616"/>
    </ligand>
</feature>
<feature type="modified residue" description="Phosphothreonine" evidence="1">
    <location>
        <position position="375"/>
    </location>
</feature>
<feature type="modified residue" description="Phosphotyrosine" evidence="1">
    <location>
        <position position="376"/>
    </location>
</feature>
<feature type="modified residue" description="Phosphoserine" evidence="1">
    <location>
        <position position="516"/>
    </location>
</feature>
<feature type="modified residue" description="Phosphothreonine" evidence="1">
    <location>
        <position position="522"/>
    </location>
</feature>
<protein>
    <recommendedName>
        <fullName>Cyclin-dependent kinase G-2</fullName>
        <shortName>CDKG;2</shortName>
        <ecNumber>2.7.11.22</ecNumber>
        <ecNumber>2.7.11.23</ecNumber>
    </recommendedName>
</protein>
<gene>
    <name type="primary">CDKG-2</name>
    <name type="ORF">OsI_015854</name>
</gene>
<dbReference type="EC" id="2.7.11.22"/>
<dbReference type="EC" id="2.7.11.23"/>
<dbReference type="EMBL" id="CM000129">
    <property type="protein sequence ID" value="EAY94621.1"/>
    <property type="molecule type" value="Genomic_DNA"/>
</dbReference>
<dbReference type="SMR" id="A2XUW1"/>
<dbReference type="STRING" id="39946.A2XUW1"/>
<dbReference type="iPTMnet" id="A2XUW1"/>
<dbReference type="EnsemblPlants" id="BGIOSGA016643-TA">
    <property type="protein sequence ID" value="BGIOSGA016643-PA"/>
    <property type="gene ID" value="BGIOSGA016643"/>
</dbReference>
<dbReference type="EnsemblPlants" id="OsIR64_04g0017110.02">
    <property type="protein sequence ID" value="OsIR64_04g0017110.02"/>
    <property type="gene ID" value="OsIR64_04g0017110"/>
</dbReference>
<dbReference type="EnsemblPlants" id="OsIR64_04g0017110.03">
    <property type="protein sequence ID" value="OsIR64_04g0017110.03"/>
    <property type="gene ID" value="OsIR64_04g0017110"/>
</dbReference>
<dbReference type="EnsemblPlants" id="OsIR64_04g0017110.04">
    <property type="protein sequence ID" value="OsIR64_04g0017110.04"/>
    <property type="gene ID" value="OsIR64_04g0017110"/>
</dbReference>
<dbReference type="EnsemblPlants" id="OsIR64_04g0017110.06">
    <property type="protein sequence ID" value="OsIR64_04g0017110.06"/>
    <property type="gene ID" value="OsIR64_04g0017110"/>
</dbReference>
<dbReference type="EnsemblPlants" id="OsMH63_04G018380_01">
    <property type="protein sequence ID" value="OsMH63_04G018380_01"/>
    <property type="gene ID" value="OsMH63_04G018380"/>
</dbReference>
<dbReference type="EnsemblPlants" id="OsMH63_04G018380_03">
    <property type="protein sequence ID" value="OsMH63_04G018380_03"/>
    <property type="gene ID" value="OsMH63_04G018380"/>
</dbReference>
<dbReference type="EnsemblPlants" id="OsMH63_04G018380_05">
    <property type="protein sequence ID" value="OsMH63_04G018380_05"/>
    <property type="gene ID" value="OsMH63_04G018380"/>
</dbReference>
<dbReference type="EnsemblPlants" id="OsMH63_04G018380_06">
    <property type="protein sequence ID" value="OsMH63_04G018380_06"/>
    <property type="gene ID" value="OsMH63_04G018380"/>
</dbReference>
<dbReference type="EnsemblPlants" id="OsMH63_04G018380_07">
    <property type="protein sequence ID" value="OsMH63_04G018380_07"/>
    <property type="gene ID" value="OsMH63_04G018380"/>
</dbReference>
<dbReference type="EnsemblPlants" id="OsMH63_04G018380_08">
    <property type="protein sequence ID" value="OsMH63_04G018380_08"/>
    <property type="gene ID" value="OsMH63_04G018380"/>
</dbReference>
<dbReference type="EnsemblPlants" id="OsPr106_04g0018320.01">
    <property type="protein sequence ID" value="OsPr106_04g0018320.01"/>
    <property type="gene ID" value="OsPr106_04g0018320"/>
</dbReference>
<dbReference type="EnsemblPlants" id="OsPr106_04g0018320.04">
    <property type="protein sequence ID" value="OsPr106_04g0018320.04"/>
    <property type="gene ID" value="OsPr106_04g0018320"/>
</dbReference>
<dbReference type="EnsemblPlants" id="OsPr106_04g0018320.05">
    <property type="protein sequence ID" value="OsPr106_04g0018320.05"/>
    <property type="gene ID" value="OsPr106_04g0018320"/>
</dbReference>
<dbReference type="EnsemblPlants" id="OsPr106_04g0018320.06">
    <property type="protein sequence ID" value="OsPr106_04g0018320.06"/>
    <property type="gene ID" value="OsPr106_04g0018320"/>
</dbReference>
<dbReference type="EnsemblPlants" id="OsZS97_04G018390_02">
    <property type="protein sequence ID" value="OsZS97_04G018390_02"/>
    <property type="gene ID" value="OsZS97_04G018390"/>
</dbReference>
<dbReference type="EnsemblPlants" id="OsZS97_04G018390_03">
    <property type="protein sequence ID" value="OsZS97_04G018390_03"/>
    <property type="gene ID" value="OsZS97_04G018390"/>
</dbReference>
<dbReference type="EnsemblPlants" id="OsZS97_04G018390_04">
    <property type="protein sequence ID" value="OsZS97_04G018390_04"/>
    <property type="gene ID" value="OsZS97_04G018390"/>
</dbReference>
<dbReference type="EnsemblPlants" id="OsZS97_04G018390_05">
    <property type="protein sequence ID" value="OsZS97_04G018390_05"/>
    <property type="gene ID" value="OsZS97_04G018390"/>
</dbReference>
<dbReference type="Gramene" id="BGIOSGA016643-TA">
    <property type="protein sequence ID" value="BGIOSGA016643-PA"/>
    <property type="gene ID" value="BGIOSGA016643"/>
</dbReference>
<dbReference type="Gramene" id="OsIR64_04g0017110.02">
    <property type="protein sequence ID" value="OsIR64_04g0017110.02"/>
    <property type="gene ID" value="OsIR64_04g0017110"/>
</dbReference>
<dbReference type="Gramene" id="OsIR64_04g0017110.03">
    <property type="protein sequence ID" value="OsIR64_04g0017110.03"/>
    <property type="gene ID" value="OsIR64_04g0017110"/>
</dbReference>
<dbReference type="Gramene" id="OsIR64_04g0017110.04">
    <property type="protein sequence ID" value="OsIR64_04g0017110.04"/>
    <property type="gene ID" value="OsIR64_04g0017110"/>
</dbReference>
<dbReference type="Gramene" id="OsIR64_04g0017110.06">
    <property type="protein sequence ID" value="OsIR64_04g0017110.06"/>
    <property type="gene ID" value="OsIR64_04g0017110"/>
</dbReference>
<dbReference type="Gramene" id="OsMH63_04G018380_01">
    <property type="protein sequence ID" value="OsMH63_04G018380_01"/>
    <property type="gene ID" value="OsMH63_04G018380"/>
</dbReference>
<dbReference type="Gramene" id="OsMH63_04G018380_03">
    <property type="protein sequence ID" value="OsMH63_04G018380_03"/>
    <property type="gene ID" value="OsMH63_04G018380"/>
</dbReference>
<dbReference type="Gramene" id="OsMH63_04G018380_05">
    <property type="protein sequence ID" value="OsMH63_04G018380_05"/>
    <property type="gene ID" value="OsMH63_04G018380"/>
</dbReference>
<dbReference type="Gramene" id="OsMH63_04G018380_06">
    <property type="protein sequence ID" value="OsMH63_04G018380_06"/>
    <property type="gene ID" value="OsMH63_04G018380"/>
</dbReference>
<dbReference type="Gramene" id="OsMH63_04G018380_07">
    <property type="protein sequence ID" value="OsMH63_04G018380_07"/>
    <property type="gene ID" value="OsMH63_04G018380"/>
</dbReference>
<dbReference type="Gramene" id="OsMH63_04G018380_08">
    <property type="protein sequence ID" value="OsMH63_04G018380_08"/>
    <property type="gene ID" value="OsMH63_04G018380"/>
</dbReference>
<dbReference type="Gramene" id="OsPr106_04g0018320.01">
    <property type="protein sequence ID" value="OsPr106_04g0018320.01"/>
    <property type="gene ID" value="OsPr106_04g0018320"/>
</dbReference>
<dbReference type="Gramene" id="OsPr106_04g0018320.04">
    <property type="protein sequence ID" value="OsPr106_04g0018320.04"/>
    <property type="gene ID" value="OsPr106_04g0018320"/>
</dbReference>
<dbReference type="Gramene" id="OsPr106_04g0018320.05">
    <property type="protein sequence ID" value="OsPr106_04g0018320.05"/>
    <property type="gene ID" value="OsPr106_04g0018320"/>
</dbReference>
<dbReference type="Gramene" id="OsPr106_04g0018320.06">
    <property type="protein sequence ID" value="OsPr106_04g0018320.06"/>
    <property type="gene ID" value="OsPr106_04g0018320"/>
</dbReference>
<dbReference type="Gramene" id="OsZS97_04G018390_02">
    <property type="protein sequence ID" value="OsZS97_04G018390_02"/>
    <property type="gene ID" value="OsZS97_04G018390"/>
</dbReference>
<dbReference type="Gramene" id="OsZS97_04G018390_03">
    <property type="protein sequence ID" value="OsZS97_04G018390_03"/>
    <property type="gene ID" value="OsZS97_04G018390"/>
</dbReference>
<dbReference type="Gramene" id="OsZS97_04G018390_04">
    <property type="protein sequence ID" value="OsZS97_04G018390_04"/>
    <property type="gene ID" value="OsZS97_04G018390"/>
</dbReference>
<dbReference type="Gramene" id="OsZS97_04G018390_05">
    <property type="protein sequence ID" value="OsZS97_04G018390_05"/>
    <property type="gene ID" value="OsZS97_04G018390"/>
</dbReference>
<dbReference type="HOGENOM" id="CLU_000288_91_2_1"/>
<dbReference type="OMA" id="NIRYPDH"/>
<dbReference type="Proteomes" id="UP000007015">
    <property type="component" value="Chromosome 4"/>
</dbReference>
<dbReference type="GO" id="GO:0005634">
    <property type="term" value="C:nucleus"/>
    <property type="evidence" value="ECO:0007669"/>
    <property type="project" value="TreeGrafter"/>
</dbReference>
<dbReference type="GO" id="GO:0005524">
    <property type="term" value="F:ATP binding"/>
    <property type="evidence" value="ECO:0007669"/>
    <property type="project" value="UniProtKB-KW"/>
</dbReference>
<dbReference type="GO" id="GO:0004693">
    <property type="term" value="F:cyclin-dependent protein serine/threonine kinase activity"/>
    <property type="evidence" value="ECO:0007669"/>
    <property type="project" value="UniProtKB-EC"/>
</dbReference>
<dbReference type="GO" id="GO:0106310">
    <property type="term" value="F:protein serine kinase activity"/>
    <property type="evidence" value="ECO:0007669"/>
    <property type="project" value="RHEA"/>
</dbReference>
<dbReference type="GO" id="GO:0008353">
    <property type="term" value="F:RNA polymerase II CTD heptapeptide repeat kinase activity"/>
    <property type="evidence" value="ECO:0007669"/>
    <property type="project" value="UniProtKB-EC"/>
</dbReference>
<dbReference type="GO" id="GO:0007346">
    <property type="term" value="P:regulation of mitotic cell cycle"/>
    <property type="evidence" value="ECO:0007669"/>
    <property type="project" value="TreeGrafter"/>
</dbReference>
<dbReference type="CDD" id="cd07843">
    <property type="entry name" value="STKc_CDC2L1"/>
    <property type="match status" value="1"/>
</dbReference>
<dbReference type="FunFam" id="1.10.510.10:FF:000211">
    <property type="entry name" value="Cyclin-dependent kinase G-2"/>
    <property type="match status" value="1"/>
</dbReference>
<dbReference type="FunFam" id="3.30.200.20:FF:000172">
    <property type="entry name" value="cyclin-dependent kinase G-2 isoform X1"/>
    <property type="match status" value="1"/>
</dbReference>
<dbReference type="Gene3D" id="3.30.200.20">
    <property type="entry name" value="Phosphorylase Kinase, domain 1"/>
    <property type="match status" value="1"/>
</dbReference>
<dbReference type="Gene3D" id="1.10.510.10">
    <property type="entry name" value="Transferase(Phosphotransferase) domain 1"/>
    <property type="match status" value="1"/>
</dbReference>
<dbReference type="InterPro" id="IPR050108">
    <property type="entry name" value="CDK"/>
</dbReference>
<dbReference type="InterPro" id="IPR045267">
    <property type="entry name" value="CDK11/PITSLRE_STKc"/>
</dbReference>
<dbReference type="InterPro" id="IPR011009">
    <property type="entry name" value="Kinase-like_dom_sf"/>
</dbReference>
<dbReference type="InterPro" id="IPR000719">
    <property type="entry name" value="Prot_kinase_dom"/>
</dbReference>
<dbReference type="InterPro" id="IPR008271">
    <property type="entry name" value="Ser/Thr_kinase_AS"/>
</dbReference>
<dbReference type="PANTHER" id="PTHR24056">
    <property type="entry name" value="CELL DIVISION PROTEIN KINASE"/>
    <property type="match status" value="1"/>
</dbReference>
<dbReference type="PANTHER" id="PTHR24056:SF107">
    <property type="entry name" value="CYCLIN-DEPENDENT KINASE 11A-RELATED"/>
    <property type="match status" value="1"/>
</dbReference>
<dbReference type="Pfam" id="PF00069">
    <property type="entry name" value="Pkinase"/>
    <property type="match status" value="1"/>
</dbReference>
<dbReference type="SMART" id="SM00220">
    <property type="entry name" value="S_TKc"/>
    <property type="match status" value="1"/>
</dbReference>
<dbReference type="SUPFAM" id="SSF56112">
    <property type="entry name" value="Protein kinase-like (PK-like)"/>
    <property type="match status" value="1"/>
</dbReference>
<dbReference type="PROSITE" id="PS50011">
    <property type="entry name" value="PROTEIN_KINASE_DOM"/>
    <property type="match status" value="1"/>
</dbReference>
<dbReference type="PROSITE" id="PS00108">
    <property type="entry name" value="PROTEIN_KINASE_ST"/>
    <property type="match status" value="1"/>
</dbReference>
<comment type="catalytic activity">
    <reaction>
        <text>L-seryl-[protein] + ATP = O-phospho-L-seryl-[protein] + ADP + H(+)</text>
        <dbReference type="Rhea" id="RHEA:17989"/>
        <dbReference type="Rhea" id="RHEA-COMP:9863"/>
        <dbReference type="Rhea" id="RHEA-COMP:11604"/>
        <dbReference type="ChEBI" id="CHEBI:15378"/>
        <dbReference type="ChEBI" id="CHEBI:29999"/>
        <dbReference type="ChEBI" id="CHEBI:30616"/>
        <dbReference type="ChEBI" id="CHEBI:83421"/>
        <dbReference type="ChEBI" id="CHEBI:456216"/>
        <dbReference type="EC" id="2.7.11.22"/>
    </reaction>
</comment>
<comment type="catalytic activity">
    <reaction>
        <text>L-threonyl-[protein] + ATP = O-phospho-L-threonyl-[protein] + ADP + H(+)</text>
        <dbReference type="Rhea" id="RHEA:46608"/>
        <dbReference type="Rhea" id="RHEA-COMP:11060"/>
        <dbReference type="Rhea" id="RHEA-COMP:11605"/>
        <dbReference type="ChEBI" id="CHEBI:15378"/>
        <dbReference type="ChEBI" id="CHEBI:30013"/>
        <dbReference type="ChEBI" id="CHEBI:30616"/>
        <dbReference type="ChEBI" id="CHEBI:61977"/>
        <dbReference type="ChEBI" id="CHEBI:456216"/>
        <dbReference type="EC" id="2.7.11.22"/>
    </reaction>
</comment>
<comment type="catalytic activity">
    <reaction>
        <text>[DNA-directed RNA polymerase] + ATP = phospho-[DNA-directed RNA polymerase] + ADP + H(+)</text>
        <dbReference type="Rhea" id="RHEA:10216"/>
        <dbReference type="Rhea" id="RHEA-COMP:11321"/>
        <dbReference type="Rhea" id="RHEA-COMP:11322"/>
        <dbReference type="ChEBI" id="CHEBI:15378"/>
        <dbReference type="ChEBI" id="CHEBI:30616"/>
        <dbReference type="ChEBI" id="CHEBI:43176"/>
        <dbReference type="ChEBI" id="CHEBI:68546"/>
        <dbReference type="ChEBI" id="CHEBI:456216"/>
        <dbReference type="EC" id="2.7.11.23"/>
    </reaction>
</comment>
<comment type="similarity">
    <text evidence="5">Belongs to the protein kinase superfamily. CMGC Ser/Thr protein kinase family. CDC2/CDKX subfamily.</text>
</comment>
<organism>
    <name type="scientific">Oryza sativa subsp. indica</name>
    <name type="common">Rice</name>
    <dbReference type="NCBI Taxonomy" id="39946"/>
    <lineage>
        <taxon>Eukaryota</taxon>
        <taxon>Viridiplantae</taxon>
        <taxon>Streptophyta</taxon>
        <taxon>Embryophyta</taxon>
        <taxon>Tracheophyta</taxon>
        <taxon>Spermatophyta</taxon>
        <taxon>Magnoliopsida</taxon>
        <taxon>Liliopsida</taxon>
        <taxon>Poales</taxon>
        <taxon>Poaceae</taxon>
        <taxon>BOP clade</taxon>
        <taxon>Oryzoideae</taxon>
        <taxon>Oryzeae</taxon>
        <taxon>Oryzinae</taxon>
        <taxon>Oryza</taxon>
        <taxon>Oryza sativa</taxon>
    </lineage>
</organism>
<sequence>MAAGRHGGYRDYEARERELDAEASRRSKEQQHHHHPSGRHQRGDSDPRCEADRRRDGGRSRGGRELSNGYGHRRSPPPRSRLSARLGDREPGEVLSGSASDDSGGRPHRARENGVSSSSRDGESVVAASASSPSKKRKFSPIIWDRDSPKPMHSDVAKGKKAVDSVPTELPLPPPPPLPPQDHIPERLAVEKSPMDVEPAVASESPEQLQEHAESRVMEEEEEYSTMRNISTSRWAGANDDEEEGAPHRKKKSASPADSAELGQRKKALSPELGEVVASDISGGRTMSRSSDSGRLGADENEDLEVDKDDYMDVDRDDDGNSDIANHQSGMDSEYEVRRSETPEPVKPPHRCINMLQGCRSVDEFERLNKINEGTYGVVYRARDKKTGEIVALKKVKMEKEREGFPLTSLREINILLSFHHPSIVDVKEVVVGSSLDSIFMVMEYMEHDLKGVMEAMKQPYSQSEVKCLMLQLLEGVKYLHDNWVLHRDLKTSNLLLNNRGELKICDFGLSRQYGSPLKPYTQLVVTLWYRAPELLLGTKEYSTAIDMWSVGCIMAELLAKEPLFNGKTEFEQLDKIFRTLGTPNEKIWPGYAKLPGVKVNFVKQPYNRLRDKFPAASFSGRPILSEAGFDLLNNLLTYDPEKRLSADAALQHEWFREVPLPKSKDFMPTFPALNELDRRTKRYLKSPDPLEEQRLKELQGNIGNRGLFG</sequence>
<evidence type="ECO:0000250" key="1"/>
<evidence type="ECO:0000255" key="2">
    <source>
        <dbReference type="PROSITE-ProRule" id="PRU00159"/>
    </source>
</evidence>
<evidence type="ECO:0000255" key="3">
    <source>
        <dbReference type="PROSITE-ProRule" id="PRU10027"/>
    </source>
</evidence>
<evidence type="ECO:0000256" key="4">
    <source>
        <dbReference type="SAM" id="MobiDB-lite"/>
    </source>
</evidence>
<evidence type="ECO:0000305" key="5"/>